<evidence type="ECO:0000250" key="1"/>
<evidence type="ECO:0000305" key="2"/>
<gene>
    <name type="primary">med20</name>
    <name type="synonym">trfp</name>
</gene>
<feature type="chain" id="PRO_0000308558" description="Mediator of RNA polymerase II transcription subunit 20">
    <location>
        <begin position="1"/>
        <end position="211"/>
    </location>
</feature>
<accession>Q6NTV8</accession>
<name>MED20_XENLA</name>
<dbReference type="EMBL" id="BC068846">
    <property type="protein sequence ID" value="AAH68846.1"/>
    <property type="molecule type" value="mRNA"/>
</dbReference>
<dbReference type="RefSeq" id="NP_001084734.1">
    <property type="nucleotide sequence ID" value="NM_001091265.1"/>
</dbReference>
<dbReference type="SMR" id="Q6NTV8"/>
<dbReference type="DNASU" id="414699"/>
<dbReference type="GeneID" id="414699"/>
<dbReference type="KEGG" id="xla:414699"/>
<dbReference type="AGR" id="Xenbase:XB-GENE-5950058"/>
<dbReference type="CTD" id="414699"/>
<dbReference type="Xenbase" id="XB-GENE-5950058">
    <property type="gene designation" value="med20.S"/>
</dbReference>
<dbReference type="OMA" id="FFVDCET"/>
<dbReference type="OrthoDB" id="1854899at2759"/>
<dbReference type="Proteomes" id="UP000186698">
    <property type="component" value="Chromosome 2S"/>
</dbReference>
<dbReference type="Bgee" id="414699">
    <property type="expression patterns" value="Expressed in neurula embryo and 19 other cell types or tissues"/>
</dbReference>
<dbReference type="GO" id="GO:0016592">
    <property type="term" value="C:mediator complex"/>
    <property type="evidence" value="ECO:0000318"/>
    <property type="project" value="GO_Central"/>
</dbReference>
<dbReference type="GO" id="GO:0003713">
    <property type="term" value="F:transcription coactivator activity"/>
    <property type="evidence" value="ECO:0000318"/>
    <property type="project" value="GO_Central"/>
</dbReference>
<dbReference type="GO" id="GO:0006357">
    <property type="term" value="P:regulation of transcription by RNA polymerase II"/>
    <property type="evidence" value="ECO:0000318"/>
    <property type="project" value="GO_Central"/>
</dbReference>
<dbReference type="InterPro" id="IPR013921">
    <property type="entry name" value="Mediator_Med20"/>
</dbReference>
<dbReference type="PANTHER" id="PTHR12465:SF0">
    <property type="entry name" value="MEDIATOR OF RNA POLYMERASE II TRANSCRIPTION SUBUNIT 20"/>
    <property type="match status" value="1"/>
</dbReference>
<dbReference type="PANTHER" id="PTHR12465">
    <property type="entry name" value="UBIQUITIN SPECIFIC PROTEASE HOMOLOG 49"/>
    <property type="match status" value="1"/>
</dbReference>
<dbReference type="Pfam" id="PF08612">
    <property type="entry name" value="Med20"/>
    <property type="match status" value="1"/>
</dbReference>
<proteinExistence type="evidence at transcript level"/>
<keyword id="KW-0010">Activator</keyword>
<keyword id="KW-0539">Nucleus</keyword>
<keyword id="KW-1185">Reference proteome</keyword>
<keyword id="KW-0804">Transcription</keyword>
<keyword id="KW-0805">Transcription regulation</keyword>
<protein>
    <recommendedName>
        <fullName>Mediator of RNA polymerase II transcription subunit 20</fullName>
    </recommendedName>
    <alternativeName>
        <fullName>Mediator complex subunit 20</fullName>
    </alternativeName>
    <alternativeName>
        <fullName>TRF-proximal protein homolog</fullName>
    </alternativeName>
</protein>
<organism>
    <name type="scientific">Xenopus laevis</name>
    <name type="common">African clawed frog</name>
    <dbReference type="NCBI Taxonomy" id="8355"/>
    <lineage>
        <taxon>Eukaryota</taxon>
        <taxon>Metazoa</taxon>
        <taxon>Chordata</taxon>
        <taxon>Craniata</taxon>
        <taxon>Vertebrata</taxon>
        <taxon>Euteleostomi</taxon>
        <taxon>Amphibia</taxon>
        <taxon>Batrachia</taxon>
        <taxon>Anura</taxon>
        <taxon>Pipoidea</taxon>
        <taxon>Pipidae</taxon>
        <taxon>Xenopodinae</taxon>
        <taxon>Xenopus</taxon>
        <taxon>Xenopus</taxon>
    </lineage>
</organism>
<comment type="function">
    <text evidence="1">Component of the Mediator complex, a coactivator involved in the regulated transcription of nearly all RNA polymerase II-dependent genes. Mediator functions as a bridge to convey information from gene-specific regulatory proteins to the basal RNA polymerase II transcription machinery. Mediator is recruited to promoters by direct interactions with regulatory proteins and serves as a scaffold for the assembly of a functional preinitiation complex with RNA polymerase II and the general transcription factors (By similarity).</text>
</comment>
<comment type="subunit">
    <text evidence="1">Component of the Mediator complex.</text>
</comment>
<comment type="subcellular location">
    <subcellularLocation>
        <location evidence="2">Nucleus</location>
    </subcellularLocation>
</comment>
<comment type="similarity">
    <text evidence="2">Belongs to the Mediator complex subunit 20 family.</text>
</comment>
<reference key="1">
    <citation type="submission" date="2004-04" db="EMBL/GenBank/DDBJ databases">
        <authorList>
            <consortium name="NIH - Xenopus Gene Collection (XGC) project"/>
        </authorList>
    </citation>
    <scope>NUCLEOTIDE SEQUENCE [LARGE SCALE MRNA]</scope>
    <source>
        <tissue>Embryo</tissue>
    </source>
</reference>
<sequence>MGVTCVSQVPLAEGKSVQQTVEILTRKLEQLGAEKQGTFYVDCETYHTAGASMGTPGQAGKLLYVMHNSEYPLSTFALFENGPCLVADLNLDVLMVKLKGFFQNAKANKMETRGTRYQYCDFLVKIGTVTVGQSGRGITVEVDYCPCAVPGDCWNLMMEFMQSFMGSHAPSVPPVFSAKHDPLYTPADTMVQYMELLNKIRKQQVTVAGMR</sequence>